<proteinExistence type="evidence at protein level"/>
<reference key="1">
    <citation type="journal article" date="1991" name="Mol. Microbiol.">
        <title>The oligopeptide transport system of Bacillus subtilis plays a role in the initiation of sporulation.</title>
        <authorList>
            <person name="Perego M."/>
            <person name="Higgins C.F."/>
            <person name="Pearce S.R."/>
            <person name="Gallagher M.P."/>
            <person name="Hoch J.A."/>
        </authorList>
    </citation>
    <scope>NUCLEOTIDE SEQUENCE [GENOMIC DNA]</scope>
    <scope>FUNCTION</scope>
    <scope>SUBUNIT</scope>
    <scope>DISRUPTION PHENOTYPE</scope>
    <source>
        <strain>168</strain>
    </source>
</reference>
<reference key="2">
    <citation type="journal article" date="1991" name="J. Bacteriol.">
        <title>The spo0K locus of Bacillus subtilis is homologous to the oligopeptide permease locus and is required for sporulation and competence.</title>
        <authorList>
            <person name="Rudner D.Z."/>
            <person name="Ledeaux J.R."/>
            <person name="Ireton K."/>
            <person name="Grossman A.D."/>
        </authorList>
    </citation>
    <scope>NUCLEOTIDE SEQUENCE [GENOMIC DNA]</scope>
    <scope>FUNCTION</scope>
    <source>
        <strain>168</strain>
    </source>
</reference>
<reference key="3">
    <citation type="journal article" date="1997" name="Nature">
        <title>The complete genome sequence of the Gram-positive bacterium Bacillus subtilis.</title>
        <authorList>
            <person name="Kunst F."/>
            <person name="Ogasawara N."/>
            <person name="Moszer I."/>
            <person name="Albertini A.M."/>
            <person name="Alloni G."/>
            <person name="Azevedo V."/>
            <person name="Bertero M.G."/>
            <person name="Bessieres P."/>
            <person name="Bolotin A."/>
            <person name="Borchert S."/>
            <person name="Borriss R."/>
            <person name="Boursier L."/>
            <person name="Brans A."/>
            <person name="Braun M."/>
            <person name="Brignell S.C."/>
            <person name="Bron S."/>
            <person name="Brouillet S."/>
            <person name="Bruschi C.V."/>
            <person name="Caldwell B."/>
            <person name="Capuano V."/>
            <person name="Carter N.M."/>
            <person name="Choi S.-K."/>
            <person name="Codani J.-J."/>
            <person name="Connerton I.F."/>
            <person name="Cummings N.J."/>
            <person name="Daniel R.A."/>
            <person name="Denizot F."/>
            <person name="Devine K.M."/>
            <person name="Duesterhoeft A."/>
            <person name="Ehrlich S.D."/>
            <person name="Emmerson P.T."/>
            <person name="Entian K.-D."/>
            <person name="Errington J."/>
            <person name="Fabret C."/>
            <person name="Ferrari E."/>
            <person name="Foulger D."/>
            <person name="Fritz C."/>
            <person name="Fujita M."/>
            <person name="Fujita Y."/>
            <person name="Fuma S."/>
            <person name="Galizzi A."/>
            <person name="Galleron N."/>
            <person name="Ghim S.-Y."/>
            <person name="Glaser P."/>
            <person name="Goffeau A."/>
            <person name="Golightly E.J."/>
            <person name="Grandi G."/>
            <person name="Guiseppi G."/>
            <person name="Guy B.J."/>
            <person name="Haga K."/>
            <person name="Haiech J."/>
            <person name="Harwood C.R."/>
            <person name="Henaut A."/>
            <person name="Hilbert H."/>
            <person name="Holsappel S."/>
            <person name="Hosono S."/>
            <person name="Hullo M.-F."/>
            <person name="Itaya M."/>
            <person name="Jones L.-M."/>
            <person name="Joris B."/>
            <person name="Karamata D."/>
            <person name="Kasahara Y."/>
            <person name="Klaerr-Blanchard M."/>
            <person name="Klein C."/>
            <person name="Kobayashi Y."/>
            <person name="Koetter P."/>
            <person name="Koningstein G."/>
            <person name="Krogh S."/>
            <person name="Kumano M."/>
            <person name="Kurita K."/>
            <person name="Lapidus A."/>
            <person name="Lardinois S."/>
            <person name="Lauber J."/>
            <person name="Lazarevic V."/>
            <person name="Lee S.-M."/>
            <person name="Levine A."/>
            <person name="Liu H."/>
            <person name="Masuda S."/>
            <person name="Mauel C."/>
            <person name="Medigue C."/>
            <person name="Medina N."/>
            <person name="Mellado R.P."/>
            <person name="Mizuno M."/>
            <person name="Moestl D."/>
            <person name="Nakai S."/>
            <person name="Noback M."/>
            <person name="Noone D."/>
            <person name="O'Reilly M."/>
            <person name="Ogawa K."/>
            <person name="Ogiwara A."/>
            <person name="Oudega B."/>
            <person name="Park S.-H."/>
            <person name="Parro V."/>
            <person name="Pohl T.M."/>
            <person name="Portetelle D."/>
            <person name="Porwollik S."/>
            <person name="Prescott A.M."/>
            <person name="Presecan E."/>
            <person name="Pujic P."/>
            <person name="Purnelle B."/>
            <person name="Rapoport G."/>
            <person name="Rey M."/>
            <person name="Reynolds S."/>
            <person name="Rieger M."/>
            <person name="Rivolta C."/>
            <person name="Rocha E."/>
            <person name="Roche B."/>
            <person name="Rose M."/>
            <person name="Sadaie Y."/>
            <person name="Sato T."/>
            <person name="Scanlan E."/>
            <person name="Schleich S."/>
            <person name="Schroeter R."/>
            <person name="Scoffone F."/>
            <person name="Sekiguchi J."/>
            <person name="Sekowska A."/>
            <person name="Seror S.J."/>
            <person name="Serror P."/>
            <person name="Shin B.-S."/>
            <person name="Soldo B."/>
            <person name="Sorokin A."/>
            <person name="Tacconi E."/>
            <person name="Takagi T."/>
            <person name="Takahashi H."/>
            <person name="Takemaru K."/>
            <person name="Takeuchi M."/>
            <person name="Tamakoshi A."/>
            <person name="Tanaka T."/>
            <person name="Terpstra P."/>
            <person name="Tognoni A."/>
            <person name="Tosato V."/>
            <person name="Uchiyama S."/>
            <person name="Vandenbol M."/>
            <person name="Vannier F."/>
            <person name="Vassarotti A."/>
            <person name="Viari A."/>
            <person name="Wambutt R."/>
            <person name="Wedler E."/>
            <person name="Wedler H."/>
            <person name="Weitzenegger T."/>
            <person name="Winters P."/>
            <person name="Wipat A."/>
            <person name="Yamamoto H."/>
            <person name="Yamane K."/>
            <person name="Yasumoto K."/>
            <person name="Yata K."/>
            <person name="Yoshida K."/>
            <person name="Yoshikawa H.-F."/>
            <person name="Zumstein E."/>
            <person name="Yoshikawa H."/>
            <person name="Danchin A."/>
        </authorList>
    </citation>
    <scope>NUCLEOTIDE SEQUENCE [LARGE SCALE GENOMIC DNA]</scope>
    <source>
        <strain>168</strain>
    </source>
</reference>
<reference key="4">
    <citation type="journal article" date="2003" name="Mol. Microbiol.">
        <title>Identification of additional TnrA-regulated genes of Bacillus subtilis associated with a TnrA box.</title>
        <authorList>
            <person name="Yoshida K."/>
            <person name="Yamaguchi H."/>
            <person name="Kinehara M."/>
            <person name="Ohki Y.-H."/>
            <person name="Nakaura Y."/>
            <person name="Fujita Y."/>
        </authorList>
    </citation>
    <scope>INDUCTION BY TNRA</scope>
</reference>
<accession>P24136</accession>
<accession>P23365</accession>
<sequence>MIRVTRLLEVKDLAISFKTYGGEVQAIRGVNFHLDKGETLAIVGESGSGKSVTSQAIMKLIPMPPGYFKRGEILFEGKDLVPLSEKEMQNVRGKEIGMIFQDPMTSLNPTMKVGKQITEVLFKHEKISKEAAKKRAVELLELVGIPMPEKRVNQFPHEFSGGMRQRVVIAMALAANPKLLIADEPTTALDVTIQAQILELMKDLQKKIDTSIIFITHDLGVVANVADRVAVMYAGQIVETGTVDEIFYDPRHPYTWGLLASMPTLESSGEEELTAIPGTPPDLTNPPKGDAFALRSSYAMKIDFEQEPPMFKVSDTHYVKSWLLHPDAPKVEPPEAVKAKMRKLANTFEKPVLVREVE</sequence>
<keyword id="KW-0067">ATP-binding</keyword>
<keyword id="KW-1003">Cell membrane</keyword>
<keyword id="KW-0178">Competence</keyword>
<keyword id="KW-0472">Membrane</keyword>
<keyword id="KW-0547">Nucleotide-binding</keyword>
<keyword id="KW-0571">Peptide transport</keyword>
<keyword id="KW-0653">Protein transport</keyword>
<keyword id="KW-1185">Reference proteome</keyword>
<keyword id="KW-0749">Sporulation</keyword>
<keyword id="KW-1278">Translocase</keyword>
<keyword id="KW-0813">Transport</keyword>
<evidence type="ECO:0000255" key="1">
    <source>
        <dbReference type="PROSITE-ProRule" id="PRU00434"/>
    </source>
</evidence>
<evidence type="ECO:0000269" key="2">
    <source>
    </source>
</evidence>
<evidence type="ECO:0000269" key="3">
    <source>
    </source>
</evidence>
<evidence type="ECO:0000269" key="4">
    <source>
    </source>
</evidence>
<evidence type="ECO:0000303" key="5">
    <source>
    </source>
</evidence>
<evidence type="ECO:0000303" key="6">
    <source>
    </source>
</evidence>
<evidence type="ECO:0000305" key="7"/>
<evidence type="ECO:0000305" key="8">
    <source>
    </source>
</evidence>
<protein>
    <recommendedName>
        <fullName evidence="7">Oligopeptide transport ATP-binding protein OppD</fullName>
        <ecNumber evidence="8">7.4.2.6</ecNumber>
    </recommendedName>
    <alternativeName>
        <fullName>Stage 0 sporulation protein KD</fullName>
    </alternativeName>
</protein>
<feature type="chain" id="PRO_0000092653" description="Oligopeptide transport ATP-binding protein OppD">
    <location>
        <begin position="1"/>
        <end position="358"/>
    </location>
</feature>
<feature type="domain" description="ABC transporter" evidence="1">
    <location>
        <begin position="8"/>
        <end position="259"/>
    </location>
</feature>
<feature type="binding site" evidence="1">
    <location>
        <begin position="44"/>
        <end position="51"/>
    </location>
    <ligand>
        <name>ATP</name>
        <dbReference type="ChEBI" id="CHEBI:30616"/>
    </ligand>
</feature>
<feature type="sequence conflict" description="In Ref. 1; CAA39790." evidence="7" ref="1">
    <location>
        <begin position="337"/>
        <end position="358"/>
    </location>
</feature>
<feature type="sequence conflict" description="In Ref. 2; AAA62691." evidence="7" ref="2">
    <original>V</original>
    <variation>G</variation>
    <location>
        <position position="357"/>
    </location>
</feature>
<dbReference type="EC" id="7.4.2.6" evidence="8"/>
<dbReference type="EMBL" id="X56347">
    <property type="protein sequence ID" value="CAA39790.1"/>
    <property type="molecule type" value="Genomic_DNA"/>
</dbReference>
<dbReference type="EMBL" id="M57689">
    <property type="protein sequence ID" value="AAA62691.1"/>
    <property type="molecule type" value="Genomic_DNA"/>
</dbReference>
<dbReference type="EMBL" id="AL009126">
    <property type="protein sequence ID" value="CAB13003.1"/>
    <property type="molecule type" value="Genomic_DNA"/>
</dbReference>
<dbReference type="PIR" id="B69669">
    <property type="entry name" value="B69669"/>
</dbReference>
<dbReference type="RefSeq" id="NP_389028.1">
    <property type="nucleotide sequence ID" value="NC_000964.3"/>
</dbReference>
<dbReference type="RefSeq" id="WP_010886477.1">
    <property type="nucleotide sequence ID" value="NZ_OZ025638.1"/>
</dbReference>
<dbReference type="RefSeq" id="WP_014906294.1">
    <property type="nucleotide sequence ID" value="NZ_JNCM01000035.1"/>
</dbReference>
<dbReference type="SMR" id="P24136"/>
<dbReference type="FunCoup" id="P24136">
    <property type="interactions" value="337"/>
</dbReference>
<dbReference type="STRING" id="224308.BSU11460"/>
<dbReference type="PaxDb" id="224308-BSU11460"/>
<dbReference type="EnsemblBacteria" id="CAB13003">
    <property type="protein sequence ID" value="CAB13003"/>
    <property type="gene ID" value="BSU_11460"/>
</dbReference>
<dbReference type="GeneID" id="939814"/>
<dbReference type="KEGG" id="bsu:BSU11460"/>
<dbReference type="PATRIC" id="fig|224308.43.peg.1197"/>
<dbReference type="eggNOG" id="COG0444">
    <property type="taxonomic scope" value="Bacteria"/>
</dbReference>
<dbReference type="InParanoid" id="P24136"/>
<dbReference type="OrthoDB" id="9802264at2"/>
<dbReference type="PhylomeDB" id="P24136"/>
<dbReference type="BioCyc" id="BSUB:BSU11460-MONOMER"/>
<dbReference type="Proteomes" id="UP000001570">
    <property type="component" value="Chromosome"/>
</dbReference>
<dbReference type="GO" id="GO:0005886">
    <property type="term" value="C:plasma membrane"/>
    <property type="evidence" value="ECO:0000318"/>
    <property type="project" value="GO_Central"/>
</dbReference>
<dbReference type="GO" id="GO:0005524">
    <property type="term" value="F:ATP binding"/>
    <property type="evidence" value="ECO:0007669"/>
    <property type="project" value="UniProtKB-KW"/>
</dbReference>
<dbReference type="GO" id="GO:0016887">
    <property type="term" value="F:ATP hydrolysis activity"/>
    <property type="evidence" value="ECO:0007669"/>
    <property type="project" value="InterPro"/>
</dbReference>
<dbReference type="GO" id="GO:0022857">
    <property type="term" value="F:transmembrane transporter activity"/>
    <property type="evidence" value="ECO:0000318"/>
    <property type="project" value="GO_Central"/>
</dbReference>
<dbReference type="GO" id="GO:0030420">
    <property type="term" value="P:establishment of competence for transformation"/>
    <property type="evidence" value="ECO:0007669"/>
    <property type="project" value="UniProtKB-KW"/>
</dbReference>
<dbReference type="GO" id="GO:0015833">
    <property type="term" value="P:peptide transport"/>
    <property type="evidence" value="ECO:0007669"/>
    <property type="project" value="UniProtKB-KW"/>
</dbReference>
<dbReference type="GO" id="GO:0015031">
    <property type="term" value="P:protein transport"/>
    <property type="evidence" value="ECO:0007669"/>
    <property type="project" value="UniProtKB-KW"/>
</dbReference>
<dbReference type="GO" id="GO:0030435">
    <property type="term" value="P:sporulation resulting in formation of a cellular spore"/>
    <property type="evidence" value="ECO:0007669"/>
    <property type="project" value="UniProtKB-KW"/>
</dbReference>
<dbReference type="GO" id="GO:0055085">
    <property type="term" value="P:transmembrane transport"/>
    <property type="evidence" value="ECO:0000318"/>
    <property type="project" value="GO_Central"/>
</dbReference>
<dbReference type="CDD" id="cd03257">
    <property type="entry name" value="ABC_NikE_OppD_transporters"/>
    <property type="match status" value="1"/>
</dbReference>
<dbReference type="FunFam" id="3.40.50.300:FF:000016">
    <property type="entry name" value="Oligopeptide ABC transporter ATP-binding component"/>
    <property type="match status" value="1"/>
</dbReference>
<dbReference type="Gene3D" id="3.40.50.300">
    <property type="entry name" value="P-loop containing nucleotide triphosphate hydrolases"/>
    <property type="match status" value="1"/>
</dbReference>
<dbReference type="InterPro" id="IPR003593">
    <property type="entry name" value="AAA+_ATPase"/>
</dbReference>
<dbReference type="InterPro" id="IPR050388">
    <property type="entry name" value="ABC_Ni/Peptide_Import"/>
</dbReference>
<dbReference type="InterPro" id="IPR003439">
    <property type="entry name" value="ABC_transporter-like_ATP-bd"/>
</dbReference>
<dbReference type="InterPro" id="IPR017871">
    <property type="entry name" value="ABC_transporter-like_CS"/>
</dbReference>
<dbReference type="InterPro" id="IPR013563">
    <property type="entry name" value="Oligopep_ABC_C"/>
</dbReference>
<dbReference type="InterPro" id="IPR027417">
    <property type="entry name" value="P-loop_NTPase"/>
</dbReference>
<dbReference type="NCBIfam" id="TIGR01727">
    <property type="entry name" value="oligo_HPY"/>
    <property type="match status" value="1"/>
</dbReference>
<dbReference type="PANTHER" id="PTHR43297:SF2">
    <property type="entry name" value="DIPEPTIDE TRANSPORT ATP-BINDING PROTEIN DPPD"/>
    <property type="match status" value="1"/>
</dbReference>
<dbReference type="PANTHER" id="PTHR43297">
    <property type="entry name" value="OLIGOPEPTIDE TRANSPORT ATP-BINDING PROTEIN APPD"/>
    <property type="match status" value="1"/>
</dbReference>
<dbReference type="Pfam" id="PF00005">
    <property type="entry name" value="ABC_tran"/>
    <property type="match status" value="1"/>
</dbReference>
<dbReference type="Pfam" id="PF08352">
    <property type="entry name" value="oligo_HPY"/>
    <property type="match status" value="1"/>
</dbReference>
<dbReference type="SMART" id="SM00382">
    <property type="entry name" value="AAA"/>
    <property type="match status" value="1"/>
</dbReference>
<dbReference type="SUPFAM" id="SSF52540">
    <property type="entry name" value="P-loop containing nucleoside triphosphate hydrolases"/>
    <property type="match status" value="1"/>
</dbReference>
<dbReference type="PROSITE" id="PS00211">
    <property type="entry name" value="ABC_TRANSPORTER_1"/>
    <property type="match status" value="1"/>
</dbReference>
<dbReference type="PROSITE" id="PS50893">
    <property type="entry name" value="ABC_TRANSPORTER_2"/>
    <property type="match status" value="1"/>
</dbReference>
<organism>
    <name type="scientific">Bacillus subtilis (strain 168)</name>
    <dbReference type="NCBI Taxonomy" id="224308"/>
    <lineage>
        <taxon>Bacteria</taxon>
        <taxon>Bacillati</taxon>
        <taxon>Bacillota</taxon>
        <taxon>Bacilli</taxon>
        <taxon>Bacillales</taxon>
        <taxon>Bacillaceae</taxon>
        <taxon>Bacillus</taxon>
    </lineage>
</organism>
<gene>
    <name evidence="6" type="primary">oppD</name>
    <name evidence="5" type="synonym">spo0KD</name>
    <name type="ordered locus">BSU11460</name>
</gene>
<name>OPPD_BACSU</name>
<comment type="function">
    <text evidence="3 4 7">Part of the ABC transporter complex OppABCDF involved in the uptake of oligopeptides (PubMed:1901616). Probably responsible for energy coupling to the transport system (Probable). Required for sporulation and genetic competence (PubMed:1899858).</text>
</comment>
<comment type="catalytic activity">
    <reaction evidence="8">
        <text>a [peptide](out) + ATP + H2O = a [peptide](in) + ADP + phosphate + H(+)</text>
        <dbReference type="Rhea" id="RHEA:78459"/>
        <dbReference type="Rhea" id="RHEA-COMP:19083"/>
        <dbReference type="ChEBI" id="CHEBI:15377"/>
        <dbReference type="ChEBI" id="CHEBI:15378"/>
        <dbReference type="ChEBI" id="CHEBI:30616"/>
        <dbReference type="ChEBI" id="CHEBI:33710"/>
        <dbReference type="ChEBI" id="CHEBI:43474"/>
        <dbReference type="ChEBI" id="CHEBI:456216"/>
        <dbReference type="EC" id="7.4.2.6"/>
    </reaction>
    <physiologicalReaction direction="left-to-right" evidence="8">
        <dbReference type="Rhea" id="RHEA:78460"/>
    </physiologicalReaction>
</comment>
<comment type="subunit">
    <text evidence="8">The complex is composed of two ATP-binding proteins (OppD and OppF), two transmembrane proteins (OppB and OppC) and a solute-binding protein (OppA).</text>
</comment>
<comment type="subcellular location">
    <subcellularLocation>
        <location evidence="8">Cell membrane</location>
        <topology evidence="8">Peripheral membrane protein</topology>
    </subcellularLocation>
</comment>
<comment type="induction">
    <text evidence="2">Positively regulated by TnrA under nitrogen-limited conditions.</text>
</comment>
<comment type="disruption phenotype">
    <text evidence="4">Inactivation of the gene results in a sporulation-defective phenotype (PubMed:1901616). Disruption confers resistance to bialaphos (PubMed:1901616).</text>
</comment>
<comment type="similarity">
    <text evidence="7">Belongs to the ABC transporter superfamily.</text>
</comment>